<name>ATPE_SHESM</name>
<reference key="1">
    <citation type="submission" date="2006-08" db="EMBL/GenBank/DDBJ databases">
        <title>Complete sequence of Shewanella sp. MR-4.</title>
        <authorList>
            <consortium name="US DOE Joint Genome Institute"/>
            <person name="Copeland A."/>
            <person name="Lucas S."/>
            <person name="Lapidus A."/>
            <person name="Barry K."/>
            <person name="Detter J.C."/>
            <person name="Glavina del Rio T."/>
            <person name="Hammon N."/>
            <person name="Israni S."/>
            <person name="Dalin E."/>
            <person name="Tice H."/>
            <person name="Pitluck S."/>
            <person name="Kiss H."/>
            <person name="Brettin T."/>
            <person name="Bruce D."/>
            <person name="Han C."/>
            <person name="Tapia R."/>
            <person name="Gilna P."/>
            <person name="Schmutz J."/>
            <person name="Larimer F."/>
            <person name="Land M."/>
            <person name="Hauser L."/>
            <person name="Kyrpides N."/>
            <person name="Mikhailova N."/>
            <person name="Nealson K."/>
            <person name="Konstantinidis K."/>
            <person name="Klappenbach J."/>
            <person name="Tiedje J."/>
            <person name="Richardson P."/>
        </authorList>
    </citation>
    <scope>NUCLEOTIDE SEQUENCE [LARGE SCALE GENOMIC DNA]</scope>
    <source>
        <strain>MR-4</strain>
    </source>
</reference>
<comment type="function">
    <text evidence="1">Produces ATP from ADP in the presence of a proton gradient across the membrane.</text>
</comment>
<comment type="subunit">
    <text>F-type ATPases have 2 components, CF(1) - the catalytic core - and CF(0) - the membrane proton channel. CF(1) has five subunits: alpha(3), beta(3), gamma(1), delta(1), epsilon(1). CF(0) has three main subunits: a, b and c.</text>
</comment>
<comment type="subcellular location">
    <subcellularLocation>
        <location evidence="1">Cell inner membrane</location>
        <topology evidence="1">Peripheral membrane protein</topology>
    </subcellularLocation>
</comment>
<comment type="similarity">
    <text evidence="1">Belongs to the ATPase epsilon chain family.</text>
</comment>
<accession>Q0HD80</accession>
<keyword id="KW-0066">ATP synthesis</keyword>
<keyword id="KW-0997">Cell inner membrane</keyword>
<keyword id="KW-1003">Cell membrane</keyword>
<keyword id="KW-0139">CF(1)</keyword>
<keyword id="KW-0375">Hydrogen ion transport</keyword>
<keyword id="KW-0406">Ion transport</keyword>
<keyword id="KW-0472">Membrane</keyword>
<keyword id="KW-0813">Transport</keyword>
<dbReference type="EMBL" id="CP000446">
    <property type="protein sequence ID" value="ABI40987.1"/>
    <property type="molecule type" value="Genomic_DNA"/>
</dbReference>
<dbReference type="RefSeq" id="WP_011624645.1">
    <property type="nucleotide sequence ID" value="NC_008321.1"/>
</dbReference>
<dbReference type="SMR" id="Q0HD80"/>
<dbReference type="KEGG" id="she:Shewmr4_3924"/>
<dbReference type="HOGENOM" id="CLU_084338_2_0_6"/>
<dbReference type="GO" id="GO:0005886">
    <property type="term" value="C:plasma membrane"/>
    <property type="evidence" value="ECO:0007669"/>
    <property type="project" value="UniProtKB-SubCell"/>
</dbReference>
<dbReference type="GO" id="GO:0045259">
    <property type="term" value="C:proton-transporting ATP synthase complex"/>
    <property type="evidence" value="ECO:0007669"/>
    <property type="project" value="UniProtKB-KW"/>
</dbReference>
<dbReference type="GO" id="GO:0005524">
    <property type="term" value="F:ATP binding"/>
    <property type="evidence" value="ECO:0007669"/>
    <property type="project" value="UniProtKB-UniRule"/>
</dbReference>
<dbReference type="GO" id="GO:0046933">
    <property type="term" value="F:proton-transporting ATP synthase activity, rotational mechanism"/>
    <property type="evidence" value="ECO:0007669"/>
    <property type="project" value="UniProtKB-UniRule"/>
</dbReference>
<dbReference type="CDD" id="cd12152">
    <property type="entry name" value="F1-ATPase_delta"/>
    <property type="match status" value="1"/>
</dbReference>
<dbReference type="FunFam" id="1.20.5.440:FF:000001">
    <property type="entry name" value="ATP synthase epsilon chain"/>
    <property type="match status" value="1"/>
</dbReference>
<dbReference type="FunFam" id="2.60.15.10:FF:000001">
    <property type="entry name" value="ATP synthase epsilon chain"/>
    <property type="match status" value="1"/>
</dbReference>
<dbReference type="Gene3D" id="1.20.5.440">
    <property type="entry name" value="ATP synthase delta/epsilon subunit, C-terminal domain"/>
    <property type="match status" value="1"/>
</dbReference>
<dbReference type="Gene3D" id="2.60.15.10">
    <property type="entry name" value="F0F1 ATP synthase delta/epsilon subunit, N-terminal"/>
    <property type="match status" value="1"/>
</dbReference>
<dbReference type="HAMAP" id="MF_00530">
    <property type="entry name" value="ATP_synth_epsil_bac"/>
    <property type="match status" value="1"/>
</dbReference>
<dbReference type="InterPro" id="IPR036794">
    <property type="entry name" value="ATP_F1_dsu/esu_C_sf"/>
</dbReference>
<dbReference type="InterPro" id="IPR001469">
    <property type="entry name" value="ATP_synth_F1_dsu/esu"/>
</dbReference>
<dbReference type="InterPro" id="IPR020546">
    <property type="entry name" value="ATP_synth_F1_dsu/esu_N"/>
</dbReference>
<dbReference type="InterPro" id="IPR020547">
    <property type="entry name" value="ATP_synth_F1_esu_C"/>
</dbReference>
<dbReference type="InterPro" id="IPR036771">
    <property type="entry name" value="ATPsynth_dsu/esu_N"/>
</dbReference>
<dbReference type="NCBIfam" id="TIGR01216">
    <property type="entry name" value="ATP_synt_epsi"/>
    <property type="match status" value="1"/>
</dbReference>
<dbReference type="NCBIfam" id="NF001847">
    <property type="entry name" value="PRK00571.1-4"/>
    <property type="match status" value="1"/>
</dbReference>
<dbReference type="PANTHER" id="PTHR13822">
    <property type="entry name" value="ATP SYNTHASE DELTA/EPSILON CHAIN"/>
    <property type="match status" value="1"/>
</dbReference>
<dbReference type="PANTHER" id="PTHR13822:SF10">
    <property type="entry name" value="ATP SYNTHASE EPSILON CHAIN, CHLOROPLASTIC"/>
    <property type="match status" value="1"/>
</dbReference>
<dbReference type="Pfam" id="PF00401">
    <property type="entry name" value="ATP-synt_DE"/>
    <property type="match status" value="1"/>
</dbReference>
<dbReference type="Pfam" id="PF02823">
    <property type="entry name" value="ATP-synt_DE_N"/>
    <property type="match status" value="1"/>
</dbReference>
<dbReference type="SUPFAM" id="SSF46604">
    <property type="entry name" value="Epsilon subunit of F1F0-ATP synthase C-terminal domain"/>
    <property type="match status" value="1"/>
</dbReference>
<dbReference type="SUPFAM" id="SSF51344">
    <property type="entry name" value="Epsilon subunit of F1F0-ATP synthase N-terminal domain"/>
    <property type="match status" value="1"/>
</dbReference>
<evidence type="ECO:0000255" key="1">
    <source>
        <dbReference type="HAMAP-Rule" id="MF_00530"/>
    </source>
</evidence>
<proteinExistence type="inferred from homology"/>
<protein>
    <recommendedName>
        <fullName evidence="1">ATP synthase epsilon chain</fullName>
    </recommendedName>
    <alternativeName>
        <fullName evidence="1">ATP synthase F1 sector epsilon subunit</fullName>
    </alternativeName>
    <alternativeName>
        <fullName evidence="1">F-ATPase epsilon subunit</fullName>
    </alternativeName>
</protein>
<feature type="chain" id="PRO_0000265890" description="ATP synthase epsilon chain">
    <location>
        <begin position="1"/>
        <end position="142"/>
    </location>
</feature>
<organism>
    <name type="scientific">Shewanella sp. (strain MR-4)</name>
    <dbReference type="NCBI Taxonomy" id="60480"/>
    <lineage>
        <taxon>Bacteria</taxon>
        <taxon>Pseudomonadati</taxon>
        <taxon>Pseudomonadota</taxon>
        <taxon>Gammaproteobacteria</taxon>
        <taxon>Alteromonadales</taxon>
        <taxon>Shewanellaceae</taxon>
        <taxon>Shewanella</taxon>
    </lineage>
</organism>
<sequence length="142" mass="15149">MAAMTVQLDIVSAESSIFSGRVASLQVTGSEGELGIMHGHAPLLSYIKPGMARIVKQDGSEEVFYLSGGLLEVQPSSVSVLADVVMRAKDIDEQAALEAKRRAEAHMATAGADFNYDAAMVELAKAMAQLRVVETIKKNIAR</sequence>
<gene>
    <name evidence="1" type="primary">atpC</name>
    <name type="ordered locus">Shewmr4_3924</name>
</gene>